<sequence>MTTNTVTRKVAWLRVVTLAIAAFIFNTTEFVPVGLLSDIAASFHMETAQTGIMLTIYAWVVALMSLPFMLLTSQVERRRLLICLFVLFIASHILSFMAWSFTVLVISRIGVAFAHAIFWSITASLAIRLAPAGKRAQALSLLATGTALAMVLGLPVGRIVGQYFGWRTTFLAIGVGAFLTLLCLIKLLPLLPSEHSGSLKSLPVLFRRPALMSIYLLTVVVVTAHYTAYSYIEPFVQNIAGLSANFATVLLLILGGAGIIGSVIFGKLGNNHASVLVSVAIALLMACLLLLMPASVSETHLAILSIFWGIAIMMIGLGMQVKVLALAPDATDVAMSLFSGIFNIGIGAGALVGNQVSLHWSMADIGYVGAIPAFLALVWSVIIFRRWPVVLEEQPQH</sequence>
<feature type="chain" id="PRO_1000127463" description="Probable sugar efflux transporter">
    <location>
        <begin position="1"/>
        <end position="397"/>
    </location>
</feature>
<feature type="transmembrane region" description="Helical" evidence="1">
    <location>
        <begin position="15"/>
        <end position="35"/>
    </location>
</feature>
<feature type="transmembrane region" description="Helical" evidence="1">
    <location>
        <begin position="51"/>
        <end position="71"/>
    </location>
</feature>
<feature type="transmembrane region" description="Helical" evidence="1">
    <location>
        <begin position="81"/>
        <end position="101"/>
    </location>
</feature>
<feature type="transmembrane region" description="Helical" evidence="1">
    <location>
        <begin position="103"/>
        <end position="123"/>
    </location>
</feature>
<feature type="transmembrane region" description="Helical" evidence="1">
    <location>
        <begin position="136"/>
        <end position="156"/>
    </location>
</feature>
<feature type="transmembrane region" description="Helical" evidence="1">
    <location>
        <begin position="170"/>
        <end position="190"/>
    </location>
</feature>
<feature type="transmembrane region" description="Helical" evidence="1">
    <location>
        <begin position="209"/>
        <end position="229"/>
    </location>
</feature>
<feature type="transmembrane region" description="Helical" evidence="1">
    <location>
        <begin position="246"/>
        <end position="266"/>
    </location>
</feature>
<feature type="transmembrane region" description="Helical" evidence="1">
    <location>
        <begin position="273"/>
        <end position="293"/>
    </location>
</feature>
<feature type="transmembrane region" description="Helical" evidence="1">
    <location>
        <begin position="301"/>
        <end position="321"/>
    </location>
</feature>
<feature type="transmembrane region" description="Helical" evidence="1">
    <location>
        <begin position="333"/>
        <end position="353"/>
    </location>
</feature>
<feature type="transmembrane region" description="Helical" evidence="1">
    <location>
        <begin position="364"/>
        <end position="384"/>
    </location>
</feature>
<accession>B7LRC4</accession>
<organism>
    <name type="scientific">Escherichia fergusonii (strain ATCC 35469 / DSM 13698 / CCUG 18766 / IAM 14443 / JCM 21226 / LMG 7866 / NBRC 102419 / NCTC 12128 / CDC 0568-73)</name>
    <dbReference type="NCBI Taxonomy" id="585054"/>
    <lineage>
        <taxon>Bacteria</taxon>
        <taxon>Pseudomonadati</taxon>
        <taxon>Pseudomonadota</taxon>
        <taxon>Gammaproteobacteria</taxon>
        <taxon>Enterobacterales</taxon>
        <taxon>Enterobacteriaceae</taxon>
        <taxon>Escherichia</taxon>
    </lineage>
</organism>
<name>SOTB_ESCF3</name>
<gene>
    <name evidence="1" type="primary">sotB</name>
    <name type="ordered locus">EFER_1547</name>
</gene>
<evidence type="ECO:0000255" key="1">
    <source>
        <dbReference type="HAMAP-Rule" id="MF_00517"/>
    </source>
</evidence>
<proteinExistence type="inferred from homology"/>
<comment type="function">
    <text evidence="1">Involved in the efflux of sugars. The physiological role may be the reduction of the intracellular concentration of toxic sugars or sugar metabolites.</text>
</comment>
<comment type="subcellular location">
    <subcellularLocation>
        <location evidence="1">Cell inner membrane</location>
        <topology evidence="1">Multi-pass membrane protein</topology>
    </subcellularLocation>
</comment>
<comment type="similarity">
    <text evidence="1">Belongs to the major facilitator superfamily. SotB (TC 2.A.1.2) family.</text>
</comment>
<reference key="1">
    <citation type="journal article" date="2009" name="PLoS Genet.">
        <title>Organised genome dynamics in the Escherichia coli species results in highly diverse adaptive paths.</title>
        <authorList>
            <person name="Touchon M."/>
            <person name="Hoede C."/>
            <person name="Tenaillon O."/>
            <person name="Barbe V."/>
            <person name="Baeriswyl S."/>
            <person name="Bidet P."/>
            <person name="Bingen E."/>
            <person name="Bonacorsi S."/>
            <person name="Bouchier C."/>
            <person name="Bouvet O."/>
            <person name="Calteau A."/>
            <person name="Chiapello H."/>
            <person name="Clermont O."/>
            <person name="Cruveiller S."/>
            <person name="Danchin A."/>
            <person name="Diard M."/>
            <person name="Dossat C."/>
            <person name="Karoui M.E."/>
            <person name="Frapy E."/>
            <person name="Garry L."/>
            <person name="Ghigo J.M."/>
            <person name="Gilles A.M."/>
            <person name="Johnson J."/>
            <person name="Le Bouguenec C."/>
            <person name="Lescat M."/>
            <person name="Mangenot S."/>
            <person name="Martinez-Jehanne V."/>
            <person name="Matic I."/>
            <person name="Nassif X."/>
            <person name="Oztas S."/>
            <person name="Petit M.A."/>
            <person name="Pichon C."/>
            <person name="Rouy Z."/>
            <person name="Ruf C.S."/>
            <person name="Schneider D."/>
            <person name="Tourret J."/>
            <person name="Vacherie B."/>
            <person name="Vallenet D."/>
            <person name="Medigue C."/>
            <person name="Rocha E.P.C."/>
            <person name="Denamur E."/>
        </authorList>
    </citation>
    <scope>NUCLEOTIDE SEQUENCE [LARGE SCALE GENOMIC DNA]</scope>
    <source>
        <strain>ATCC 35469 / DSM 13698 / BCRC 15582 / CCUG 18766 / IAM 14443 / JCM 21226 / LMG 7866 / NBRC 102419 / NCTC 12128 / CDC 0568-73</strain>
    </source>
</reference>
<dbReference type="EMBL" id="CU928158">
    <property type="protein sequence ID" value="CAQ89066.1"/>
    <property type="molecule type" value="Genomic_DNA"/>
</dbReference>
<dbReference type="RefSeq" id="WP_000210835.1">
    <property type="nucleotide sequence ID" value="NC_011740.1"/>
</dbReference>
<dbReference type="SMR" id="B7LRC4"/>
<dbReference type="GeneID" id="75057409"/>
<dbReference type="KEGG" id="efe:EFER_1547"/>
<dbReference type="HOGENOM" id="CLU_001265_61_1_6"/>
<dbReference type="OrthoDB" id="9788453at2"/>
<dbReference type="Proteomes" id="UP000000745">
    <property type="component" value="Chromosome"/>
</dbReference>
<dbReference type="GO" id="GO:0005886">
    <property type="term" value="C:plasma membrane"/>
    <property type="evidence" value="ECO:0007669"/>
    <property type="project" value="UniProtKB-SubCell"/>
</dbReference>
<dbReference type="GO" id="GO:0015144">
    <property type="term" value="F:carbohydrate transmembrane transporter activity"/>
    <property type="evidence" value="ECO:0007669"/>
    <property type="project" value="UniProtKB-UniRule"/>
</dbReference>
<dbReference type="CDD" id="cd17324">
    <property type="entry name" value="MFS_NepI_like"/>
    <property type="match status" value="1"/>
</dbReference>
<dbReference type="Gene3D" id="1.20.1250.20">
    <property type="entry name" value="MFS general substrate transporter like domains"/>
    <property type="match status" value="1"/>
</dbReference>
<dbReference type="HAMAP" id="MF_00517">
    <property type="entry name" value="MFS_SotB"/>
    <property type="match status" value="1"/>
</dbReference>
<dbReference type="InterPro" id="IPR011701">
    <property type="entry name" value="MFS"/>
</dbReference>
<dbReference type="InterPro" id="IPR020846">
    <property type="entry name" value="MFS_dom"/>
</dbReference>
<dbReference type="InterPro" id="IPR050189">
    <property type="entry name" value="MFS_Efflux_Transporters"/>
</dbReference>
<dbReference type="InterPro" id="IPR036259">
    <property type="entry name" value="MFS_trans_sf"/>
</dbReference>
<dbReference type="InterPro" id="IPR023495">
    <property type="entry name" value="Sugar_effux_transptr_put"/>
</dbReference>
<dbReference type="NCBIfam" id="NF002921">
    <property type="entry name" value="PRK03545.1"/>
    <property type="match status" value="1"/>
</dbReference>
<dbReference type="PANTHER" id="PTHR43124">
    <property type="entry name" value="PURINE EFFLUX PUMP PBUE"/>
    <property type="match status" value="1"/>
</dbReference>
<dbReference type="PANTHER" id="PTHR43124:SF4">
    <property type="entry name" value="SUGAR EFFLUX TRANSPORTER"/>
    <property type="match status" value="1"/>
</dbReference>
<dbReference type="Pfam" id="PF07690">
    <property type="entry name" value="MFS_1"/>
    <property type="match status" value="1"/>
</dbReference>
<dbReference type="SUPFAM" id="SSF103473">
    <property type="entry name" value="MFS general substrate transporter"/>
    <property type="match status" value="1"/>
</dbReference>
<dbReference type="PROSITE" id="PS50850">
    <property type="entry name" value="MFS"/>
    <property type="match status" value="1"/>
</dbReference>
<protein>
    <recommendedName>
        <fullName evidence="1">Probable sugar efflux transporter</fullName>
    </recommendedName>
</protein>
<keyword id="KW-0997">Cell inner membrane</keyword>
<keyword id="KW-1003">Cell membrane</keyword>
<keyword id="KW-0472">Membrane</keyword>
<keyword id="KW-0762">Sugar transport</keyword>
<keyword id="KW-0812">Transmembrane</keyword>
<keyword id="KW-1133">Transmembrane helix</keyword>
<keyword id="KW-0813">Transport</keyword>